<feature type="chain" id="PRO_0000252690" description="HTH-type transcriptional regulator VqsM">
    <location>
        <begin position="1"/>
        <end position="325"/>
    </location>
</feature>
<feature type="domain" description="HTH araC/xylS-type" evidence="1">
    <location>
        <begin position="226"/>
        <end position="323"/>
    </location>
</feature>
<feature type="DNA-binding region" description="H-T-H motif" evidence="1">
    <location>
        <begin position="243"/>
        <end position="264"/>
    </location>
</feature>
<feature type="DNA-binding region" description="H-T-H motif" evidence="1">
    <location>
        <begin position="290"/>
        <end position="313"/>
    </location>
</feature>
<name>VQSM_PSEAE</name>
<reference key="1">
    <citation type="journal article" date="2000" name="Nature">
        <title>Complete genome sequence of Pseudomonas aeruginosa PAO1, an opportunistic pathogen.</title>
        <authorList>
            <person name="Stover C.K."/>
            <person name="Pham X.-Q.T."/>
            <person name="Erwin A.L."/>
            <person name="Mizoguchi S.D."/>
            <person name="Warrener P."/>
            <person name="Hickey M.J."/>
            <person name="Brinkman F.S.L."/>
            <person name="Hufnagle W.O."/>
            <person name="Kowalik D.J."/>
            <person name="Lagrou M."/>
            <person name="Garber R.L."/>
            <person name="Goltry L."/>
            <person name="Tolentino E."/>
            <person name="Westbrock-Wadman S."/>
            <person name="Yuan Y."/>
            <person name="Brody L.L."/>
            <person name="Coulter S.N."/>
            <person name="Folger K.R."/>
            <person name="Kas A."/>
            <person name="Larbig K."/>
            <person name="Lim R.M."/>
            <person name="Smith K.A."/>
            <person name="Spencer D.H."/>
            <person name="Wong G.K.-S."/>
            <person name="Wu Z."/>
            <person name="Paulsen I.T."/>
            <person name="Reizer J."/>
            <person name="Saier M.H. Jr."/>
            <person name="Hancock R.E.W."/>
            <person name="Lory S."/>
            <person name="Olson M.V."/>
        </authorList>
    </citation>
    <scope>NUCLEOTIDE SEQUENCE [LARGE SCALE GENOMIC DNA]</scope>
    <source>
        <strain>ATCC 15692 / DSM 22644 / CIP 104116 / JCM 14847 / LMG 12228 / 1C / PRS 101 / PAO1</strain>
    </source>
</reference>
<reference key="2">
    <citation type="journal article" date="2005" name="Mol. Microbiol.">
        <title>VqsM, a novel AraC-type global regulator of quorum-sensing signalling and virulence in Pseudomonas aeruginosa.</title>
        <authorList>
            <person name="Dong Y.-H."/>
            <person name="Zhang X.-F."/>
            <person name="Xu J.-L."/>
            <person name="Tan A.-T."/>
            <person name="Zhang L.-H."/>
        </authorList>
    </citation>
    <scope>FUNCTION</scope>
    <source>
        <strain>ATCC 15692 / DSM 22644 / CIP 104116 / JCM 14847 / LMG 12228 / 1C / PRS 101 / PAO1</strain>
    </source>
</reference>
<accession>Q9I1P2</accession>
<sequence>MVTEHIFDFEWRPLQNYLRDRDIAIPPFAAEQESRSDALYNWIVSKGYSGKEGLNLGTYYHISDYGVIGLALLCAENVGDILKVIRAYVKLFNRDIANVGVKPRENYEVEIHISVNFKPEWNDASRQFHVNVIASATYKLIMDLLGNDFPISALTVPVHGADKTIYEGFFSLPVKHEGNDIIFSFPAHQLNRTLATANPAVFQSALTMAGESFNALLEVEMGGLRQRIELFLDSIPDQYPSLVTTAKYLRMNERTVRRRLADEGCTYRQIVDKARKERAIALLLNSSIPVDRISDILGYSETASFRHAFRRWTGQSTTEFRNSFH</sequence>
<keyword id="KW-0010">Activator</keyword>
<keyword id="KW-0238">DNA-binding</keyword>
<keyword id="KW-0673">Quorum sensing</keyword>
<keyword id="KW-1185">Reference proteome</keyword>
<keyword id="KW-0678">Repressor</keyword>
<keyword id="KW-0804">Transcription</keyword>
<keyword id="KW-0805">Transcription regulation</keyword>
<proteinExistence type="predicted"/>
<gene>
    <name type="primary">vqsM</name>
    <name type="ordered locus">PA2227</name>
</gene>
<organism>
    <name type="scientific">Pseudomonas aeruginosa (strain ATCC 15692 / DSM 22644 / CIP 104116 / JCM 14847 / LMG 12228 / 1C / PRS 101 / PAO1)</name>
    <dbReference type="NCBI Taxonomy" id="208964"/>
    <lineage>
        <taxon>Bacteria</taxon>
        <taxon>Pseudomonadati</taxon>
        <taxon>Pseudomonadota</taxon>
        <taxon>Gammaproteobacteria</taxon>
        <taxon>Pseudomonadales</taxon>
        <taxon>Pseudomonadaceae</taxon>
        <taxon>Pseudomonas</taxon>
    </lineage>
</organism>
<protein>
    <recommendedName>
        <fullName>HTH-type transcriptional regulator VqsM</fullName>
    </recommendedName>
    <alternativeName>
        <fullName>Virulence and quorum sensing modulator protein</fullName>
    </alternativeName>
</protein>
<evidence type="ECO:0000255" key="1">
    <source>
        <dbReference type="PROSITE-ProRule" id="PRU00593"/>
    </source>
</evidence>
<evidence type="ECO:0000269" key="2">
    <source>
    </source>
</evidence>
<comment type="function">
    <text evidence="2">Transcriptional regulator involved in both the repression (at least 99 genes, such as mexR and algU) and in the activation (at least 203 genes, such as mvfR, rsaL, vqsR and rpoS) of regulatory or putative regulatory proteins which are implicated in quorum sensing, virulence and multidrug resistance.</text>
</comment>
<comment type="miscellaneous">
    <text>Mutation in vqsM resulted in loss of proteolytic and elastase activity, significantly decreased expression of lasI and rhlI, which are responsible for acyl homoserine lactone (acyl-HSL) biosynthesis, much reduced swimming and swarming capacity as well as decreased capacity of killing C.elegans.</text>
</comment>
<dbReference type="EMBL" id="AE004091">
    <property type="protein sequence ID" value="AAG05615.1"/>
    <property type="molecule type" value="Genomic_DNA"/>
</dbReference>
<dbReference type="PIR" id="D83366">
    <property type="entry name" value="D83366"/>
</dbReference>
<dbReference type="RefSeq" id="NP_250917.1">
    <property type="nucleotide sequence ID" value="NC_002516.2"/>
</dbReference>
<dbReference type="RefSeq" id="WP_003113714.1">
    <property type="nucleotide sequence ID" value="NZ_QZGE01000014.1"/>
</dbReference>
<dbReference type="SMR" id="Q9I1P2"/>
<dbReference type="STRING" id="208964.PA2227"/>
<dbReference type="PaxDb" id="208964-PA2227"/>
<dbReference type="DNASU" id="882297"/>
<dbReference type="GeneID" id="882297"/>
<dbReference type="KEGG" id="pae:PA2227"/>
<dbReference type="PATRIC" id="fig|208964.12.peg.2327"/>
<dbReference type="PseudoCAP" id="PA2227"/>
<dbReference type="HOGENOM" id="CLU_047522_3_1_6"/>
<dbReference type="InParanoid" id="Q9I1P2"/>
<dbReference type="OrthoDB" id="6506763at2"/>
<dbReference type="PhylomeDB" id="Q9I1P2"/>
<dbReference type="BioCyc" id="PAER208964:G1FZ6-2267-MONOMER"/>
<dbReference type="Proteomes" id="UP000002438">
    <property type="component" value="Chromosome"/>
</dbReference>
<dbReference type="CollecTF" id="EXPREG_00001670"/>
<dbReference type="GO" id="GO:0032993">
    <property type="term" value="C:protein-DNA complex"/>
    <property type="evidence" value="ECO:0000315"/>
    <property type="project" value="CollecTF"/>
</dbReference>
<dbReference type="GO" id="GO:0001216">
    <property type="term" value="F:DNA-binding transcription activator activity"/>
    <property type="evidence" value="ECO:0000315"/>
    <property type="project" value="CollecTF"/>
</dbReference>
<dbReference type="GO" id="GO:0003700">
    <property type="term" value="F:DNA-binding transcription factor activity"/>
    <property type="evidence" value="ECO:0000318"/>
    <property type="project" value="GO_Central"/>
</dbReference>
<dbReference type="GO" id="GO:0000976">
    <property type="term" value="F:transcription cis-regulatory region binding"/>
    <property type="evidence" value="ECO:0000315"/>
    <property type="project" value="CollecTF"/>
</dbReference>
<dbReference type="GO" id="GO:0045893">
    <property type="term" value="P:positive regulation of DNA-templated transcription"/>
    <property type="evidence" value="ECO:0000270"/>
    <property type="project" value="CollecTF"/>
</dbReference>
<dbReference type="GO" id="GO:0009372">
    <property type="term" value="P:quorum sensing"/>
    <property type="evidence" value="ECO:0007669"/>
    <property type="project" value="UniProtKB-KW"/>
</dbReference>
<dbReference type="Gene3D" id="1.10.10.60">
    <property type="entry name" value="Homeodomain-like"/>
    <property type="match status" value="1"/>
</dbReference>
<dbReference type="InterPro" id="IPR032687">
    <property type="entry name" value="AraC-type_N"/>
</dbReference>
<dbReference type="InterPro" id="IPR009057">
    <property type="entry name" value="Homeodomain-like_sf"/>
</dbReference>
<dbReference type="InterPro" id="IPR018060">
    <property type="entry name" value="HTH_AraC"/>
</dbReference>
<dbReference type="PANTHER" id="PTHR47894">
    <property type="entry name" value="HTH-TYPE TRANSCRIPTIONAL REGULATOR GADX"/>
    <property type="match status" value="1"/>
</dbReference>
<dbReference type="PANTHER" id="PTHR47894:SF1">
    <property type="entry name" value="HTH-TYPE TRANSCRIPTIONAL REGULATOR VQSM"/>
    <property type="match status" value="1"/>
</dbReference>
<dbReference type="Pfam" id="PF12625">
    <property type="entry name" value="Arabinose_bd"/>
    <property type="match status" value="1"/>
</dbReference>
<dbReference type="Pfam" id="PF12833">
    <property type="entry name" value="HTH_18"/>
    <property type="match status" value="1"/>
</dbReference>
<dbReference type="SMART" id="SM00342">
    <property type="entry name" value="HTH_ARAC"/>
    <property type="match status" value="1"/>
</dbReference>
<dbReference type="SUPFAM" id="SSF46689">
    <property type="entry name" value="Homeodomain-like"/>
    <property type="match status" value="1"/>
</dbReference>
<dbReference type="PROSITE" id="PS01124">
    <property type="entry name" value="HTH_ARAC_FAMILY_2"/>
    <property type="match status" value="1"/>
</dbReference>